<organismHost>
    <name type="scientific">Solanum tuberosum</name>
    <name type="common">Potato</name>
    <dbReference type="NCBI Taxonomy" id="4113"/>
</organismHost>
<name>CAPSD_PVSP</name>
<proteinExistence type="inferred from homology"/>
<feature type="chain" id="PRO_0000222640" description="Capsid protein">
    <location>
        <begin position="1"/>
        <end position="293"/>
    </location>
</feature>
<feature type="region of interest" description="Disordered" evidence="1">
    <location>
        <begin position="1"/>
        <end position="39"/>
    </location>
</feature>
<keyword id="KW-0167">Capsid protein</keyword>
<keyword id="KW-1139">Helical capsid protein</keyword>
<keyword id="KW-0687">Ribonucleoprotein</keyword>
<keyword id="KW-0946">Virion</keyword>
<sequence length="293" mass="32408">MPPKPDPSSSGEAPQAMQPAPPPRAEGHMYAQPEGPGQNEEAMLEQRLIRLIELMATKRHNSTLSNISFEIGRPSLEPTPEMRRNPENPYSRFSIDELFKMEIRSVSNNMANTEQMAQITADIAGLGVPTEHVAGVILKVVIMCASVSSSVYLDPAGTVEFPTGAVPLDSIIAIMKNRAGLRKVCRLYAPVVWNYMLVQNRPPSDWQAMGFQWNARFAAFDTFDYVTNGAAIQPVEGLIRRPTPEETIAHNAHKSMAIDKSNRNERLANTNVEYTGGMLGAEIVRNHRNAINQ</sequence>
<protein>
    <recommendedName>
        <fullName>Capsid protein</fullName>
    </recommendedName>
    <alternativeName>
        <fullName>Coat protein</fullName>
        <shortName>CP</shortName>
    </alternativeName>
</protein>
<organism>
    <name type="scientific">Potato virus S (strain Peruvian)</name>
    <dbReference type="NCBI Taxonomy" id="12170"/>
    <lineage>
        <taxon>Viruses</taxon>
        <taxon>Riboviria</taxon>
        <taxon>Orthornavirae</taxon>
        <taxon>Kitrinoviricota</taxon>
        <taxon>Alsuviricetes</taxon>
        <taxon>Tymovirales</taxon>
        <taxon>Betaflexiviridae</taxon>
        <taxon>Quinvirinae</taxon>
        <taxon>Carlavirus</taxon>
        <taxon>Potato virus S</taxon>
    </lineage>
</organism>
<evidence type="ECO:0000256" key="1">
    <source>
        <dbReference type="SAM" id="MobiDB-lite"/>
    </source>
</evidence>
<evidence type="ECO:0000305" key="2"/>
<reference key="1">
    <citation type="journal article" date="1989" name="J. Gen. Virol.">
        <title>Organization and interviral homologies of the 3'-terminal portion of potato virus S RNA.</title>
        <authorList>
            <person name="Mackenzie D.J."/>
            <person name="Tremaine J.H."/>
            <person name="Stace-Smith R."/>
        </authorList>
    </citation>
    <scope>NUCLEOTIDE SEQUENCE [GENOMIC RNA]</scope>
</reference>
<reference key="2">
    <citation type="journal article" date="2005" name="Mol. Plant Microbe Interact.">
        <title>A new cell-to-cell transport model for Potexviruses.</title>
        <authorList>
            <person name="Verchot-Lubicz J."/>
        </authorList>
    </citation>
    <scope>REVIEW</scope>
</reference>
<accession>P16653</accession>
<comment type="function">
    <text>Required for genome encapsidation. Forms ribonucleoprotein complexes along with TGB1 helicase and viral RNA.</text>
</comment>
<comment type="subcellular location">
    <subcellularLocation>
        <location evidence="2">Virion</location>
    </subcellularLocation>
</comment>
<comment type="miscellaneous">
    <text>The N- and the C-terminus of this capsid protein may be exposed on the surface of the virus particle. The central core sequence may be important in maintaining correct tertiary structure of the capsid protein and/or play a role in interacting with the viral RNA.</text>
</comment>
<comment type="similarity">
    <text evidence="2">Belongs to the potexviruses coat protein family.</text>
</comment>
<dbReference type="EMBL" id="D00461">
    <property type="protein sequence ID" value="BAA00355.1"/>
    <property type="molecule type" value="Genomic_RNA"/>
</dbReference>
<dbReference type="PIR" id="JA0127">
    <property type="entry name" value="VCVYPV"/>
</dbReference>
<dbReference type="SMR" id="P16653"/>
<dbReference type="GO" id="GO:0019029">
    <property type="term" value="C:helical viral capsid"/>
    <property type="evidence" value="ECO:0007669"/>
    <property type="project" value="UniProtKB-KW"/>
</dbReference>
<dbReference type="GO" id="GO:1990904">
    <property type="term" value="C:ribonucleoprotein complex"/>
    <property type="evidence" value="ECO:0007669"/>
    <property type="project" value="UniProtKB-KW"/>
</dbReference>
<dbReference type="GO" id="GO:0005198">
    <property type="term" value="F:structural molecule activity"/>
    <property type="evidence" value="ECO:0007669"/>
    <property type="project" value="InterPro"/>
</dbReference>
<dbReference type="InterPro" id="IPR013569">
    <property type="entry name" value="Carlavirus_coat_N"/>
</dbReference>
<dbReference type="InterPro" id="IPR000052">
    <property type="entry name" value="Pltvir_coat"/>
</dbReference>
<dbReference type="Pfam" id="PF00286">
    <property type="entry name" value="Flexi_CP"/>
    <property type="match status" value="1"/>
</dbReference>
<dbReference type="Pfam" id="PF08358">
    <property type="entry name" value="Flexi_CP_N"/>
    <property type="match status" value="1"/>
</dbReference>
<dbReference type="PRINTS" id="PR00232">
    <property type="entry name" value="POTXCARLCOAT"/>
</dbReference>
<dbReference type="PROSITE" id="PS00418">
    <property type="entry name" value="POTEX_CARLAVIRUS_COAT"/>
    <property type="match status" value="1"/>
</dbReference>